<gene>
    <name evidence="8" type="primary">HDA14</name>
    <name evidence="9" type="synonym">ASDAC</name>
    <name evidence="12" type="ordered locus">At4g33470</name>
    <name evidence="13" type="ORF">F17M5.230</name>
</gene>
<name>HDA14_ARATH</name>
<feature type="transit peptide" description="Chloroplast" evidence="2">
    <location>
        <begin position="1"/>
        <end position="44"/>
    </location>
</feature>
<feature type="chain" id="PRO_0000280090" description="Histone deacetylase 14, chloroplastic">
    <location>
        <begin position="45"/>
        <end position="423"/>
    </location>
</feature>
<feature type="region of interest" description="Histone deacetylase">
    <location>
        <begin position="62"/>
        <end position="392"/>
    </location>
</feature>
<feature type="active site" description="Proton donor/acceptor" evidence="1">
    <location>
        <position position="202"/>
    </location>
</feature>
<feature type="binding site" evidence="1">
    <location>
        <position position="239"/>
    </location>
    <ligand>
        <name>Zn(2+)</name>
        <dbReference type="ChEBI" id="CHEBI:29105"/>
    </ligand>
</feature>
<feature type="binding site" evidence="1">
    <location>
        <position position="241"/>
    </location>
    <ligand>
        <name>Zn(2+)</name>
        <dbReference type="ChEBI" id="CHEBI:29105"/>
    </ligand>
</feature>
<feature type="binding site" evidence="1">
    <location>
        <position position="326"/>
    </location>
    <ligand>
        <name>Zn(2+)</name>
        <dbReference type="ChEBI" id="CHEBI:29105"/>
    </ligand>
</feature>
<feature type="site" description="Polarizes the scissile carbonyl of the substrate" evidence="1">
    <location>
        <position position="370"/>
    </location>
</feature>
<protein>
    <recommendedName>
        <fullName evidence="8">Histone deacetylase 14, chloroplastic</fullName>
        <ecNumber evidence="7">3.5.1.-</ecNumber>
    </recommendedName>
    <alternativeName>
        <fullName evidence="9">N-acetylserotonin deacetylase</fullName>
    </alternativeName>
</protein>
<comment type="function">
    <text evidence="3 5 6 7 11">Regulates lysine acetylation levels of plastid proteins related to photosynthesis (PubMed:29061669). Involved in the regulation of the activation state of RuBisCO, which is controlled by lysine acetylation of RuBisCO activase under low-light conditions (PubMed:29061669). Associates with alpha- and beta-tubulins and deacetylate alpha-tubulin (PubMed:22404109). Does not seem to be required for the cellular patterning in the root epidermis (PubMed:16176989). Involved in the regulation of melatonin biosynthesis by catalyzing the deacetylation of N-acetylserotonin to produce serotonin (PubMed:29247559). N-acetylserotonin is methylated by acetylserotonin O-methyltransferase (ASMT) to produce melatonin (N-acetyl-5-methoxytryptamine) (Probable). Deacetylates melatonin to produce 5-methoxytryptamine (PubMed:29247559). In vitro, deacetylates N-acetyltyramine and N-acetyltryptamine to produce tyramine and tryptamine, respectively (PubMed:29247559).</text>
</comment>
<comment type="catalytic activity">
    <reaction evidence="7">
        <text>N-acetylserotonin + H2O = serotonin + acetate</text>
        <dbReference type="Rhea" id="RHEA:67196"/>
        <dbReference type="ChEBI" id="CHEBI:15377"/>
        <dbReference type="ChEBI" id="CHEBI:17697"/>
        <dbReference type="ChEBI" id="CHEBI:30089"/>
        <dbReference type="ChEBI" id="CHEBI:350546"/>
    </reaction>
    <physiologicalReaction direction="left-to-right" evidence="7">
        <dbReference type="Rhea" id="RHEA:67197"/>
    </physiologicalReaction>
</comment>
<comment type="catalytic activity">
    <reaction evidence="7">
        <text>N-acetyltyramine + H2O = tyramine + acetate</text>
        <dbReference type="Rhea" id="RHEA:67200"/>
        <dbReference type="ChEBI" id="CHEBI:15377"/>
        <dbReference type="ChEBI" id="CHEBI:30089"/>
        <dbReference type="ChEBI" id="CHEBI:125610"/>
        <dbReference type="ChEBI" id="CHEBI:327995"/>
    </reaction>
    <physiologicalReaction direction="left-to-right" evidence="7">
        <dbReference type="Rhea" id="RHEA:67201"/>
    </physiologicalReaction>
</comment>
<comment type="catalytic activity">
    <reaction evidence="7">
        <text>N-acetyltryptamine + H2O = tryptamine + acetate</text>
        <dbReference type="Rhea" id="RHEA:67204"/>
        <dbReference type="ChEBI" id="CHEBI:15377"/>
        <dbReference type="ChEBI" id="CHEBI:30089"/>
        <dbReference type="ChEBI" id="CHEBI:55515"/>
        <dbReference type="ChEBI" id="CHEBI:57887"/>
    </reaction>
    <physiologicalReaction direction="left-to-right" evidence="7">
        <dbReference type="Rhea" id="RHEA:67205"/>
    </physiologicalReaction>
</comment>
<comment type="catalytic activity">
    <reaction evidence="7">
        <text>melatonin + H2O = 5-methoxytryptamine + acetate</text>
        <dbReference type="Rhea" id="RHEA:67208"/>
        <dbReference type="ChEBI" id="CHEBI:15377"/>
        <dbReference type="ChEBI" id="CHEBI:16796"/>
        <dbReference type="ChEBI" id="CHEBI:30089"/>
        <dbReference type="ChEBI" id="CHEBI:166874"/>
    </reaction>
    <physiologicalReaction direction="left-to-right" evidence="7">
        <dbReference type="Rhea" id="RHEA:67209"/>
    </physiologicalReaction>
</comment>
<comment type="cofactor">
    <cofactor evidence="1">
        <name>Zn(2+)</name>
        <dbReference type="ChEBI" id="CHEBI:29105"/>
    </cofactor>
    <text evidence="1">Binds 1 zinc ion per subunit.</text>
</comment>
<comment type="activity regulation">
    <text evidence="6">Its activity is inhibited by trichostatin A (TSA), a known histone deacetylase inhibitor.</text>
</comment>
<comment type="biophysicochemical properties">
    <kinetics>
        <KM evidence="7">701 uM for N-acetylserotonin</KM>
        <Vmax evidence="7">1.2 pmol/sec/mg enzyme with N-acetylserotonin as substrate</Vmax>
    </kinetics>
</comment>
<comment type="subunit">
    <text evidence="5">Interacts with PP2A2.</text>
</comment>
<comment type="subcellular location">
    <subcellularLocation>
        <location evidence="5">Nucleus</location>
    </subcellularLocation>
    <subcellularLocation>
        <location evidence="4 5">Cytoplasm</location>
    </subcellularLocation>
    <subcellularLocation>
        <location evidence="6 7">Plastid</location>
        <location evidence="6 7">Chloroplast stroma</location>
    </subcellularLocation>
    <subcellularLocation>
        <location evidence="6">Mitochondrion</location>
    </subcellularLocation>
</comment>
<comment type="tissue specificity">
    <text evidence="4">Expressed in stems, leaves, flowers, siliques and mature seeds.</text>
</comment>
<comment type="similarity">
    <text evidence="10">Belongs to the histone deacetylase family.</text>
</comment>
<comment type="sequence caution" evidence="10">
    <conflict type="erroneous gene model prediction">
        <sequence resource="EMBL-CDS" id="CAB38805"/>
    </conflict>
</comment>
<comment type="sequence caution" evidence="10">
    <conflict type="erroneous gene model prediction">
        <sequence resource="EMBL-CDS" id="CAB80064"/>
    </conflict>
</comment>
<proteinExistence type="evidence at protein level"/>
<accession>Q941D6</accession>
<accession>Q9SZC4</accession>
<evidence type="ECO:0000250" key="1">
    <source>
        <dbReference type="UniProtKB" id="Q8GXJ1"/>
    </source>
</evidence>
<evidence type="ECO:0000255" key="2"/>
<evidence type="ECO:0000269" key="3">
    <source>
    </source>
</evidence>
<evidence type="ECO:0000269" key="4">
    <source>
    </source>
</evidence>
<evidence type="ECO:0000269" key="5">
    <source>
    </source>
</evidence>
<evidence type="ECO:0000269" key="6">
    <source>
    </source>
</evidence>
<evidence type="ECO:0000269" key="7">
    <source>
    </source>
</evidence>
<evidence type="ECO:0000303" key="8">
    <source>
    </source>
</evidence>
<evidence type="ECO:0000303" key="9">
    <source>
    </source>
</evidence>
<evidence type="ECO:0000305" key="10"/>
<evidence type="ECO:0000305" key="11">
    <source>
    </source>
</evidence>
<evidence type="ECO:0000312" key="12">
    <source>
        <dbReference type="EMBL" id="AEE86231.1"/>
    </source>
</evidence>
<evidence type="ECO:0000312" key="13">
    <source>
        <dbReference type="EMBL" id="CAB38805.1"/>
    </source>
</evidence>
<reference key="1">
    <citation type="journal article" date="1999" name="Nature">
        <title>Sequence and analysis of chromosome 4 of the plant Arabidopsis thaliana.</title>
        <authorList>
            <person name="Mayer K.F.X."/>
            <person name="Schueller C."/>
            <person name="Wambutt R."/>
            <person name="Murphy G."/>
            <person name="Volckaert G."/>
            <person name="Pohl T."/>
            <person name="Duesterhoeft A."/>
            <person name="Stiekema W."/>
            <person name="Entian K.-D."/>
            <person name="Terryn N."/>
            <person name="Harris B."/>
            <person name="Ansorge W."/>
            <person name="Brandt P."/>
            <person name="Grivell L.A."/>
            <person name="Rieger M."/>
            <person name="Weichselgartner M."/>
            <person name="de Simone V."/>
            <person name="Obermaier B."/>
            <person name="Mache R."/>
            <person name="Mueller M."/>
            <person name="Kreis M."/>
            <person name="Delseny M."/>
            <person name="Puigdomenech P."/>
            <person name="Watson M."/>
            <person name="Schmidtheini T."/>
            <person name="Reichert B."/>
            <person name="Portetelle D."/>
            <person name="Perez-Alonso M."/>
            <person name="Boutry M."/>
            <person name="Bancroft I."/>
            <person name="Vos P."/>
            <person name="Hoheisel J."/>
            <person name="Zimmermann W."/>
            <person name="Wedler H."/>
            <person name="Ridley P."/>
            <person name="Langham S.-A."/>
            <person name="McCullagh B."/>
            <person name="Bilham L."/>
            <person name="Robben J."/>
            <person name="van der Schueren J."/>
            <person name="Grymonprez B."/>
            <person name="Chuang Y.-J."/>
            <person name="Vandenbussche F."/>
            <person name="Braeken M."/>
            <person name="Weltjens I."/>
            <person name="Voet M."/>
            <person name="Bastiaens I."/>
            <person name="Aert R."/>
            <person name="Defoor E."/>
            <person name="Weitzenegger T."/>
            <person name="Bothe G."/>
            <person name="Ramsperger U."/>
            <person name="Hilbert H."/>
            <person name="Braun M."/>
            <person name="Holzer E."/>
            <person name="Brandt A."/>
            <person name="Peters S."/>
            <person name="van Staveren M."/>
            <person name="Dirkse W."/>
            <person name="Mooijman P."/>
            <person name="Klein Lankhorst R."/>
            <person name="Rose M."/>
            <person name="Hauf J."/>
            <person name="Koetter P."/>
            <person name="Berneiser S."/>
            <person name="Hempel S."/>
            <person name="Feldpausch M."/>
            <person name="Lamberth S."/>
            <person name="Van den Daele H."/>
            <person name="De Keyser A."/>
            <person name="Buysshaert C."/>
            <person name="Gielen J."/>
            <person name="Villarroel R."/>
            <person name="De Clercq R."/>
            <person name="van Montagu M."/>
            <person name="Rogers J."/>
            <person name="Cronin A."/>
            <person name="Quail M.A."/>
            <person name="Bray-Allen S."/>
            <person name="Clark L."/>
            <person name="Doggett J."/>
            <person name="Hall S."/>
            <person name="Kay M."/>
            <person name="Lennard N."/>
            <person name="McLay K."/>
            <person name="Mayes R."/>
            <person name="Pettett A."/>
            <person name="Rajandream M.A."/>
            <person name="Lyne M."/>
            <person name="Benes V."/>
            <person name="Rechmann S."/>
            <person name="Borkova D."/>
            <person name="Bloecker H."/>
            <person name="Scharfe M."/>
            <person name="Grimm M."/>
            <person name="Loehnert T.-H."/>
            <person name="Dose S."/>
            <person name="de Haan M."/>
            <person name="Maarse A.C."/>
            <person name="Schaefer M."/>
            <person name="Mueller-Auer S."/>
            <person name="Gabel C."/>
            <person name="Fuchs M."/>
            <person name="Fartmann B."/>
            <person name="Granderath K."/>
            <person name="Dauner D."/>
            <person name="Herzl A."/>
            <person name="Neumann S."/>
            <person name="Argiriou A."/>
            <person name="Vitale D."/>
            <person name="Liguori R."/>
            <person name="Piravandi E."/>
            <person name="Massenet O."/>
            <person name="Quigley F."/>
            <person name="Clabauld G."/>
            <person name="Muendlein A."/>
            <person name="Felber R."/>
            <person name="Schnabl S."/>
            <person name="Hiller R."/>
            <person name="Schmidt W."/>
            <person name="Lecharny A."/>
            <person name="Aubourg S."/>
            <person name="Chefdor F."/>
            <person name="Cooke R."/>
            <person name="Berger C."/>
            <person name="Monfort A."/>
            <person name="Casacuberta E."/>
            <person name="Gibbons T."/>
            <person name="Weber N."/>
            <person name="Vandenbol M."/>
            <person name="Bargues M."/>
            <person name="Terol J."/>
            <person name="Torres A."/>
            <person name="Perez-Perez A."/>
            <person name="Purnelle B."/>
            <person name="Bent E."/>
            <person name="Johnson S."/>
            <person name="Tacon D."/>
            <person name="Jesse T."/>
            <person name="Heijnen L."/>
            <person name="Schwarz S."/>
            <person name="Scholler P."/>
            <person name="Heber S."/>
            <person name="Francs P."/>
            <person name="Bielke C."/>
            <person name="Frishman D."/>
            <person name="Haase D."/>
            <person name="Lemcke K."/>
            <person name="Mewes H.-W."/>
            <person name="Stocker S."/>
            <person name="Zaccaria P."/>
            <person name="Bevan M."/>
            <person name="Wilson R.K."/>
            <person name="de la Bastide M."/>
            <person name="Habermann K."/>
            <person name="Parnell L."/>
            <person name="Dedhia N."/>
            <person name="Gnoj L."/>
            <person name="Schutz K."/>
            <person name="Huang E."/>
            <person name="Spiegel L."/>
            <person name="Sekhon M."/>
            <person name="Murray J."/>
            <person name="Sheet P."/>
            <person name="Cordes M."/>
            <person name="Abu-Threideh J."/>
            <person name="Stoneking T."/>
            <person name="Kalicki J."/>
            <person name="Graves T."/>
            <person name="Harmon G."/>
            <person name="Edwards J."/>
            <person name="Latreille P."/>
            <person name="Courtney L."/>
            <person name="Cloud J."/>
            <person name="Abbott A."/>
            <person name="Scott K."/>
            <person name="Johnson D."/>
            <person name="Minx P."/>
            <person name="Bentley D."/>
            <person name="Fulton B."/>
            <person name="Miller N."/>
            <person name="Greco T."/>
            <person name="Kemp K."/>
            <person name="Kramer J."/>
            <person name="Fulton L."/>
            <person name="Mardis E."/>
            <person name="Dante M."/>
            <person name="Pepin K."/>
            <person name="Hillier L.W."/>
            <person name="Nelson J."/>
            <person name="Spieth J."/>
            <person name="Ryan E."/>
            <person name="Andrews S."/>
            <person name="Geisel C."/>
            <person name="Layman D."/>
            <person name="Du H."/>
            <person name="Ali J."/>
            <person name="Berghoff A."/>
            <person name="Jones K."/>
            <person name="Drone K."/>
            <person name="Cotton M."/>
            <person name="Joshu C."/>
            <person name="Antonoiu B."/>
            <person name="Zidanic M."/>
            <person name="Strong C."/>
            <person name="Sun H."/>
            <person name="Lamar B."/>
            <person name="Yordan C."/>
            <person name="Ma P."/>
            <person name="Zhong J."/>
            <person name="Preston R."/>
            <person name="Vil D."/>
            <person name="Shekher M."/>
            <person name="Matero A."/>
            <person name="Shah R."/>
            <person name="Swaby I.K."/>
            <person name="O'Shaughnessy A."/>
            <person name="Rodriguez M."/>
            <person name="Hoffman J."/>
            <person name="Till S."/>
            <person name="Granat S."/>
            <person name="Shohdy N."/>
            <person name="Hasegawa A."/>
            <person name="Hameed A."/>
            <person name="Lodhi M."/>
            <person name="Johnson A."/>
            <person name="Chen E."/>
            <person name="Marra M.A."/>
            <person name="Martienssen R."/>
            <person name="McCombie W.R."/>
        </authorList>
    </citation>
    <scope>NUCLEOTIDE SEQUENCE [LARGE SCALE GENOMIC DNA]</scope>
    <source>
        <strain>cv. Columbia</strain>
    </source>
</reference>
<reference key="2">
    <citation type="journal article" date="2017" name="Plant J.">
        <title>Araport11: a complete reannotation of the Arabidopsis thaliana reference genome.</title>
        <authorList>
            <person name="Cheng C.Y."/>
            <person name="Krishnakumar V."/>
            <person name="Chan A.P."/>
            <person name="Thibaud-Nissen F."/>
            <person name="Schobel S."/>
            <person name="Town C.D."/>
        </authorList>
    </citation>
    <scope>GENOME REANNOTATION</scope>
    <source>
        <strain>cv. Columbia</strain>
    </source>
</reference>
<reference key="3">
    <citation type="journal article" date="2003" name="Science">
        <title>Empirical analysis of transcriptional activity in the Arabidopsis genome.</title>
        <authorList>
            <person name="Yamada K."/>
            <person name="Lim J."/>
            <person name="Dale J.M."/>
            <person name="Chen H."/>
            <person name="Shinn P."/>
            <person name="Palm C.J."/>
            <person name="Southwick A.M."/>
            <person name="Wu H.C."/>
            <person name="Kim C.J."/>
            <person name="Nguyen M."/>
            <person name="Pham P.K."/>
            <person name="Cheuk R.F."/>
            <person name="Karlin-Newmann G."/>
            <person name="Liu S.X."/>
            <person name="Lam B."/>
            <person name="Sakano H."/>
            <person name="Wu T."/>
            <person name="Yu G."/>
            <person name="Miranda M."/>
            <person name="Quach H.L."/>
            <person name="Tripp M."/>
            <person name="Chang C.H."/>
            <person name="Lee J.M."/>
            <person name="Toriumi M.J."/>
            <person name="Chan M.M."/>
            <person name="Tang C.C."/>
            <person name="Onodera C.S."/>
            <person name="Deng J.M."/>
            <person name="Akiyama K."/>
            <person name="Ansari Y."/>
            <person name="Arakawa T."/>
            <person name="Banh J."/>
            <person name="Banno F."/>
            <person name="Bowser L."/>
            <person name="Brooks S.Y."/>
            <person name="Carninci P."/>
            <person name="Chao Q."/>
            <person name="Choy N."/>
            <person name="Enju A."/>
            <person name="Goldsmith A.D."/>
            <person name="Gurjal M."/>
            <person name="Hansen N.F."/>
            <person name="Hayashizaki Y."/>
            <person name="Johnson-Hopson C."/>
            <person name="Hsuan V.W."/>
            <person name="Iida K."/>
            <person name="Karnes M."/>
            <person name="Khan S."/>
            <person name="Koesema E."/>
            <person name="Ishida J."/>
            <person name="Jiang P.X."/>
            <person name="Jones T."/>
            <person name="Kawai J."/>
            <person name="Kamiya A."/>
            <person name="Meyers C."/>
            <person name="Nakajima M."/>
            <person name="Narusaka M."/>
            <person name="Seki M."/>
            <person name="Sakurai T."/>
            <person name="Satou M."/>
            <person name="Tamse R."/>
            <person name="Vaysberg M."/>
            <person name="Wallender E.K."/>
            <person name="Wong C."/>
            <person name="Yamamura Y."/>
            <person name="Yuan S."/>
            <person name="Shinozaki K."/>
            <person name="Davis R.W."/>
            <person name="Theologis A."/>
            <person name="Ecker J.R."/>
        </authorList>
    </citation>
    <scope>NUCLEOTIDE SEQUENCE [LARGE SCALE MRNA]</scope>
    <source>
        <strain>cv. Columbia</strain>
    </source>
</reference>
<reference key="4">
    <citation type="journal article" date="2002" name="Nucleic Acids Res.">
        <title>Analysis of histone acetyltransferase and histone deacetylase families of Arabidopsis thaliana suggests functional diversification of chromatin modification among multicellular eukaryotes.</title>
        <authorList>
            <person name="Pandey R."/>
            <person name="Mueller A."/>
            <person name="Napoli C.A."/>
            <person name="Selinger D.A."/>
            <person name="Pikaard C.S."/>
            <person name="Richards E.J."/>
            <person name="Bender J."/>
            <person name="Mount D.W."/>
            <person name="Jorgensen R.A."/>
        </authorList>
    </citation>
    <scope>GENE FAMILY</scope>
    <scope>NOMENCLATURE</scope>
</reference>
<reference key="5">
    <citation type="journal article" date="2005" name="Proc. Natl. Acad. Sci. U.S.A.">
        <title>Histone acetylation affects expression of cellular patterning genes in the Arabidopsis root epidermis.</title>
        <authorList>
            <person name="Xu C.-R."/>
            <person name="Liu C."/>
            <person name="Wang Y.-L."/>
            <person name="Li L.-C."/>
            <person name="Chen W.-Q."/>
            <person name="Xu Z.-H."/>
            <person name="Bai S.-N."/>
        </authorList>
    </citation>
    <scope>FUNCTION</scope>
</reference>
<reference key="6">
    <citation type="journal article" date="2012" name="Plant J.">
        <title>Arabidopsis thaliana histone deacetylase 14 (HDA14) is an alpha-tubulin deacetylase that associates with PP2A and enriches in the microtubule fraction with the putative histone acetyltransferase ELP3.</title>
        <authorList>
            <person name="Tran H.T."/>
            <person name="Nimick M."/>
            <person name="Uhrig R.G."/>
            <person name="Templeton G."/>
            <person name="Morrice N."/>
            <person name="Gourlay R."/>
            <person name="DeLong A."/>
            <person name="Moorhead G.B."/>
        </authorList>
    </citation>
    <scope>FUNCTION</scope>
    <scope>INTERACTION WITH PP2A2</scope>
    <scope>SUBCELLULAR LOCATION</scope>
</reference>
<reference key="7">
    <citation type="journal article" date="2012" name="PLoS ONE">
        <title>Subcellular localization of class II HDAs in Arabidopsis thaliana: nucleocytoplasmic shuttling of HDA15 is driven by light.</title>
        <authorList>
            <person name="Alinsug M.V."/>
            <person name="Chen F.F."/>
            <person name="Luo M."/>
            <person name="Tai R."/>
            <person name="Jiang L."/>
            <person name="Wu K."/>
        </authorList>
    </citation>
    <scope>SUBCELLULAR LOCATION</scope>
    <scope>TISSUE SPECIFICITY</scope>
</reference>
<reference key="8">
    <citation type="journal article" date="2017" name="Mol. Syst. Biol.">
        <title>Lysine acetylome profiling uncovers novel histone deacetylase substrate proteins in Arabidopsis.</title>
        <authorList>
            <person name="Hartl M."/>
            <person name="Fuessl M."/>
            <person name="Boersema P.J."/>
            <person name="Jost J.O."/>
            <person name="Kramer K."/>
            <person name="Bakirbas A."/>
            <person name="Sindlinger J."/>
            <person name="Ploechinger M."/>
            <person name="Leister D."/>
            <person name="Uhrig G."/>
            <person name="Moorhead G.B."/>
            <person name="Cox J."/>
            <person name="Salvucci M.E."/>
            <person name="Schwarzer D."/>
            <person name="Mann M."/>
            <person name="Finkemeier I."/>
        </authorList>
    </citation>
    <scope>FUNCTION</scope>
    <scope>ACTIVITY REGULATION</scope>
    <scope>SUBCELLULAR LOCATION</scope>
</reference>
<reference key="9">
    <citation type="journal article" date="2018" name="J. Pineal Res.">
        <title>Rice histone deacetylase 10 and Arabidopsis histone deacetylase 14 genes encode N-acetylserotonin deacetylase, which catalyzes conversion of N-acetylserotonin into serotonin, a reverse reaction for melatonin biosynthesis in plants.</title>
        <authorList>
            <person name="Lee K."/>
            <person name="Lee H.Y."/>
            <person name="Back K."/>
        </authorList>
    </citation>
    <scope>FUNCTION</scope>
    <scope>CATALYTIC ACTIVITY</scope>
    <scope>BIOPHYSICOCHEMICAL PROPERTIES</scope>
    <scope>SUBCELLULAR LOCATION</scope>
</reference>
<dbReference type="EC" id="3.5.1.-" evidence="7"/>
<dbReference type="EMBL" id="AL035678">
    <property type="protein sequence ID" value="CAB38805.1"/>
    <property type="status" value="ALT_SEQ"/>
    <property type="molecule type" value="Genomic_DNA"/>
</dbReference>
<dbReference type="EMBL" id="AL161583">
    <property type="protein sequence ID" value="CAB80064.1"/>
    <property type="status" value="ALT_SEQ"/>
    <property type="molecule type" value="Genomic_DNA"/>
</dbReference>
<dbReference type="EMBL" id="CP002687">
    <property type="protein sequence ID" value="AEE86231.1"/>
    <property type="molecule type" value="Genomic_DNA"/>
</dbReference>
<dbReference type="EMBL" id="AY052234">
    <property type="protein sequence ID" value="AAK97704.1"/>
    <property type="molecule type" value="mRNA"/>
</dbReference>
<dbReference type="EMBL" id="AY113069">
    <property type="protein sequence ID" value="AAM47377.1"/>
    <property type="molecule type" value="mRNA"/>
</dbReference>
<dbReference type="PIR" id="T05998">
    <property type="entry name" value="T05998"/>
</dbReference>
<dbReference type="RefSeq" id="NP_567921.1">
    <property type="nucleotide sequence ID" value="NM_119501.4"/>
</dbReference>
<dbReference type="SMR" id="Q941D6"/>
<dbReference type="BioGRID" id="14768">
    <property type="interactions" value="2"/>
</dbReference>
<dbReference type="FunCoup" id="Q941D6">
    <property type="interactions" value="904"/>
</dbReference>
<dbReference type="STRING" id="3702.Q941D6"/>
<dbReference type="PaxDb" id="3702-AT4G33470.1"/>
<dbReference type="ProteomicsDB" id="230374"/>
<dbReference type="EnsemblPlants" id="AT4G33470.1">
    <property type="protein sequence ID" value="AT4G33470.1"/>
    <property type="gene ID" value="AT4G33470"/>
</dbReference>
<dbReference type="GeneID" id="829484"/>
<dbReference type="Gramene" id="AT4G33470.1">
    <property type="protein sequence ID" value="AT4G33470.1"/>
    <property type="gene ID" value="AT4G33470"/>
</dbReference>
<dbReference type="KEGG" id="ath:AT4G33470"/>
<dbReference type="Araport" id="AT4G33470"/>
<dbReference type="TAIR" id="AT4G33470">
    <property type="gene designation" value="HDA14"/>
</dbReference>
<dbReference type="eggNOG" id="KOG1343">
    <property type="taxonomic scope" value="Eukaryota"/>
</dbReference>
<dbReference type="HOGENOM" id="CLU_007727_8_2_1"/>
<dbReference type="InParanoid" id="Q941D6"/>
<dbReference type="OMA" id="CTSPAMG"/>
<dbReference type="PhylomeDB" id="Q941D6"/>
<dbReference type="PRO" id="PR:Q941D6"/>
<dbReference type="Proteomes" id="UP000006548">
    <property type="component" value="Chromosome 4"/>
</dbReference>
<dbReference type="ExpressionAtlas" id="Q941D6">
    <property type="expression patterns" value="baseline and differential"/>
</dbReference>
<dbReference type="GO" id="GO:0009507">
    <property type="term" value="C:chloroplast"/>
    <property type="evidence" value="ECO:0007005"/>
    <property type="project" value="TAIR"/>
</dbReference>
<dbReference type="GO" id="GO:0009570">
    <property type="term" value="C:chloroplast stroma"/>
    <property type="evidence" value="ECO:0000314"/>
    <property type="project" value="UniProtKB"/>
</dbReference>
<dbReference type="GO" id="GO:0005737">
    <property type="term" value="C:cytoplasm"/>
    <property type="evidence" value="ECO:0000314"/>
    <property type="project" value="UniProtKB"/>
</dbReference>
<dbReference type="GO" id="GO:0005829">
    <property type="term" value="C:cytosol"/>
    <property type="evidence" value="ECO:0000314"/>
    <property type="project" value="TAIR"/>
</dbReference>
<dbReference type="GO" id="GO:0005739">
    <property type="term" value="C:mitochondrion"/>
    <property type="evidence" value="ECO:0000314"/>
    <property type="project" value="UniProtKB"/>
</dbReference>
<dbReference type="GO" id="GO:0005634">
    <property type="term" value="C:nucleus"/>
    <property type="evidence" value="ECO:0000314"/>
    <property type="project" value="TAIR"/>
</dbReference>
<dbReference type="GO" id="GO:0043014">
    <property type="term" value="F:alpha-tubulin binding"/>
    <property type="evidence" value="ECO:0000314"/>
    <property type="project" value="TAIR"/>
</dbReference>
<dbReference type="GO" id="GO:0048487">
    <property type="term" value="F:beta-tubulin binding"/>
    <property type="evidence" value="ECO:0000314"/>
    <property type="project" value="TAIR"/>
</dbReference>
<dbReference type="GO" id="GO:0019213">
    <property type="term" value="F:deacetylase activity"/>
    <property type="evidence" value="ECO:0000314"/>
    <property type="project" value="UniProtKB"/>
</dbReference>
<dbReference type="GO" id="GO:0141221">
    <property type="term" value="F:histone deacetylase activity, hydrolytic mechanism"/>
    <property type="evidence" value="ECO:0007669"/>
    <property type="project" value="UniProtKB-EC"/>
</dbReference>
<dbReference type="GO" id="GO:0033558">
    <property type="term" value="F:protein lysine deacetylase activity"/>
    <property type="evidence" value="ECO:0000314"/>
    <property type="project" value="UniProtKB"/>
</dbReference>
<dbReference type="GO" id="GO:0051721">
    <property type="term" value="F:protein phosphatase 2A binding"/>
    <property type="evidence" value="ECO:0000314"/>
    <property type="project" value="TAIR"/>
</dbReference>
<dbReference type="GO" id="GO:0042903">
    <property type="term" value="F:tubulin deacetylase activity"/>
    <property type="evidence" value="ECO:0000314"/>
    <property type="project" value="TAIR"/>
</dbReference>
<dbReference type="GO" id="GO:0008270">
    <property type="term" value="F:zinc ion binding"/>
    <property type="evidence" value="ECO:0000250"/>
    <property type="project" value="UniProtKB"/>
</dbReference>
<dbReference type="GO" id="GO:0006325">
    <property type="term" value="P:chromatin organization"/>
    <property type="evidence" value="ECO:0007669"/>
    <property type="project" value="UniProtKB-KW"/>
</dbReference>
<dbReference type="GO" id="GO:0030186">
    <property type="term" value="P:melatonin metabolic process"/>
    <property type="evidence" value="ECO:0000314"/>
    <property type="project" value="UniProtKB"/>
</dbReference>
<dbReference type="GO" id="GO:0042548">
    <property type="term" value="P:regulation of photosynthesis, light reaction"/>
    <property type="evidence" value="ECO:0000315"/>
    <property type="project" value="UniProtKB"/>
</dbReference>
<dbReference type="GO" id="GO:0090042">
    <property type="term" value="P:tubulin deacetylation"/>
    <property type="evidence" value="ECO:0000314"/>
    <property type="project" value="TAIR"/>
</dbReference>
<dbReference type="CDD" id="cd09992">
    <property type="entry name" value="HDAC_classII"/>
    <property type="match status" value="1"/>
</dbReference>
<dbReference type="FunFam" id="3.40.800.20:FF:000027">
    <property type="entry name" value="HDA14"/>
    <property type="match status" value="1"/>
</dbReference>
<dbReference type="Gene3D" id="3.40.800.20">
    <property type="entry name" value="Histone deacetylase domain"/>
    <property type="match status" value="1"/>
</dbReference>
<dbReference type="InterPro" id="IPR050284">
    <property type="entry name" value="HDAC_PDAC"/>
</dbReference>
<dbReference type="InterPro" id="IPR000286">
    <property type="entry name" value="His_deacetylse"/>
</dbReference>
<dbReference type="InterPro" id="IPR023801">
    <property type="entry name" value="His_deacetylse_dom"/>
</dbReference>
<dbReference type="InterPro" id="IPR037138">
    <property type="entry name" value="His_deacetylse_dom_sf"/>
</dbReference>
<dbReference type="InterPro" id="IPR023696">
    <property type="entry name" value="Ureohydrolase_dom_sf"/>
</dbReference>
<dbReference type="PANTHER" id="PTHR10625:SF11">
    <property type="entry name" value="HISTONE DEACETYLASE 14, CHLOROPLASTIC"/>
    <property type="match status" value="1"/>
</dbReference>
<dbReference type="PANTHER" id="PTHR10625">
    <property type="entry name" value="HISTONE DEACETYLASE HDAC1-RELATED"/>
    <property type="match status" value="1"/>
</dbReference>
<dbReference type="Pfam" id="PF00850">
    <property type="entry name" value="Hist_deacetyl"/>
    <property type="match status" value="1"/>
</dbReference>
<dbReference type="PRINTS" id="PR01270">
    <property type="entry name" value="HDASUPER"/>
</dbReference>
<dbReference type="SUPFAM" id="SSF52768">
    <property type="entry name" value="Arginase/deacetylase"/>
    <property type="match status" value="1"/>
</dbReference>
<keyword id="KW-0150">Chloroplast</keyword>
<keyword id="KW-0156">Chromatin regulator</keyword>
<keyword id="KW-0963">Cytoplasm</keyword>
<keyword id="KW-0378">Hydrolase</keyword>
<keyword id="KW-0479">Metal-binding</keyword>
<keyword id="KW-0496">Mitochondrion</keyword>
<keyword id="KW-0539">Nucleus</keyword>
<keyword id="KW-0934">Plastid</keyword>
<keyword id="KW-1185">Reference proteome</keyword>
<keyword id="KW-0678">Repressor</keyword>
<keyword id="KW-0804">Transcription</keyword>
<keyword id="KW-0805">Transcription regulation</keyword>
<keyword id="KW-0809">Transit peptide</keyword>
<keyword id="KW-0862">Zinc</keyword>
<sequence length="423" mass="45577">MSMALIVRPFFVPGSAGISGSRNICKKNQWRKYLLKPSGSSINCSFSTEKNPLLPSIQQLADARLIYSVSAALGHNKESHPECSARVPAIVNALEMNELTPKFRGSQILELANFKTATVEDIANVHDKAYVFGLEKAMDEASDSGLIFIEGSGPTYATSTTFQDSLIAAGAGMALVDSVIAASRNSVDPPIGFALIRPPGHHAVPKGPMGFCVFGNVAIAARHAQRTHGLKRIFIIDFDVHHGNGTNDAFTEDPDIFFLSTHQDGSYPGTGKISDIGKGKGEGTTLNLPLPGGSGDIAMRTVFEEIIVPCAQRFKPDIILVSAGYDAHVLDPLANLQFTTATYYSLAKDIKRLAKEVCGGRCVFFLEGGYNLESLSSSVADSFRALLGEDSLASEFDNPAYLYDEPMRKVRDAIQRAKSIHCL</sequence>
<organism>
    <name type="scientific">Arabidopsis thaliana</name>
    <name type="common">Mouse-ear cress</name>
    <dbReference type="NCBI Taxonomy" id="3702"/>
    <lineage>
        <taxon>Eukaryota</taxon>
        <taxon>Viridiplantae</taxon>
        <taxon>Streptophyta</taxon>
        <taxon>Embryophyta</taxon>
        <taxon>Tracheophyta</taxon>
        <taxon>Spermatophyta</taxon>
        <taxon>Magnoliopsida</taxon>
        <taxon>eudicotyledons</taxon>
        <taxon>Gunneridae</taxon>
        <taxon>Pentapetalae</taxon>
        <taxon>rosids</taxon>
        <taxon>malvids</taxon>
        <taxon>Brassicales</taxon>
        <taxon>Brassicaceae</taxon>
        <taxon>Camelineae</taxon>
        <taxon>Arabidopsis</taxon>
    </lineage>
</organism>